<evidence type="ECO:0000255" key="1">
    <source>
        <dbReference type="HAMAP-Rule" id="MF_00123"/>
    </source>
</evidence>
<dbReference type="EC" id="6.1.1.19" evidence="1"/>
<dbReference type="EMBL" id="CP000048">
    <property type="protein sequence ID" value="AAX17098.1"/>
    <property type="molecule type" value="Genomic_DNA"/>
</dbReference>
<dbReference type="RefSeq" id="WP_012422349.1">
    <property type="nucleotide sequence ID" value="NZ_CP073136.1"/>
</dbReference>
<dbReference type="SMR" id="B2S0U2"/>
<dbReference type="GeneID" id="71843412"/>
<dbReference type="KEGG" id="bhr:BH0594"/>
<dbReference type="HOGENOM" id="CLU_006406_6_1_12"/>
<dbReference type="Proteomes" id="UP000008834">
    <property type="component" value="Chromosome"/>
</dbReference>
<dbReference type="GO" id="GO:0005737">
    <property type="term" value="C:cytoplasm"/>
    <property type="evidence" value="ECO:0007669"/>
    <property type="project" value="UniProtKB-SubCell"/>
</dbReference>
<dbReference type="GO" id="GO:0004814">
    <property type="term" value="F:arginine-tRNA ligase activity"/>
    <property type="evidence" value="ECO:0007669"/>
    <property type="project" value="UniProtKB-UniRule"/>
</dbReference>
<dbReference type="GO" id="GO:0005524">
    <property type="term" value="F:ATP binding"/>
    <property type="evidence" value="ECO:0007669"/>
    <property type="project" value="UniProtKB-UniRule"/>
</dbReference>
<dbReference type="GO" id="GO:0006420">
    <property type="term" value="P:arginyl-tRNA aminoacylation"/>
    <property type="evidence" value="ECO:0007669"/>
    <property type="project" value="UniProtKB-UniRule"/>
</dbReference>
<dbReference type="CDD" id="cd00671">
    <property type="entry name" value="ArgRS_core"/>
    <property type="match status" value="1"/>
</dbReference>
<dbReference type="FunFam" id="1.10.730.10:FF:000006">
    <property type="entry name" value="Arginyl-tRNA synthetase 2, mitochondrial"/>
    <property type="match status" value="1"/>
</dbReference>
<dbReference type="Gene3D" id="3.30.1360.70">
    <property type="entry name" value="Arginyl tRNA synthetase N-terminal domain"/>
    <property type="match status" value="1"/>
</dbReference>
<dbReference type="Gene3D" id="3.40.50.620">
    <property type="entry name" value="HUPs"/>
    <property type="match status" value="1"/>
</dbReference>
<dbReference type="Gene3D" id="1.10.730.10">
    <property type="entry name" value="Isoleucyl-tRNA Synthetase, Domain 1"/>
    <property type="match status" value="1"/>
</dbReference>
<dbReference type="HAMAP" id="MF_00123">
    <property type="entry name" value="Arg_tRNA_synth"/>
    <property type="match status" value="1"/>
</dbReference>
<dbReference type="InterPro" id="IPR001412">
    <property type="entry name" value="aa-tRNA-synth_I_CS"/>
</dbReference>
<dbReference type="InterPro" id="IPR001278">
    <property type="entry name" value="Arg-tRNA-ligase"/>
</dbReference>
<dbReference type="InterPro" id="IPR005148">
    <property type="entry name" value="Arg-tRNA-synth_N"/>
</dbReference>
<dbReference type="InterPro" id="IPR036695">
    <property type="entry name" value="Arg-tRNA-synth_N_sf"/>
</dbReference>
<dbReference type="InterPro" id="IPR035684">
    <property type="entry name" value="ArgRS_core"/>
</dbReference>
<dbReference type="InterPro" id="IPR008909">
    <property type="entry name" value="DALR_anticod-bd"/>
</dbReference>
<dbReference type="InterPro" id="IPR014729">
    <property type="entry name" value="Rossmann-like_a/b/a_fold"/>
</dbReference>
<dbReference type="InterPro" id="IPR009080">
    <property type="entry name" value="tRNAsynth_Ia_anticodon-bd"/>
</dbReference>
<dbReference type="NCBIfam" id="TIGR00456">
    <property type="entry name" value="argS"/>
    <property type="match status" value="1"/>
</dbReference>
<dbReference type="PANTHER" id="PTHR11956:SF5">
    <property type="entry name" value="ARGININE--TRNA LIGASE, CYTOPLASMIC"/>
    <property type="match status" value="1"/>
</dbReference>
<dbReference type="PANTHER" id="PTHR11956">
    <property type="entry name" value="ARGINYL-TRNA SYNTHETASE"/>
    <property type="match status" value="1"/>
</dbReference>
<dbReference type="Pfam" id="PF03485">
    <property type="entry name" value="Arg_tRNA_synt_N"/>
    <property type="match status" value="1"/>
</dbReference>
<dbReference type="Pfam" id="PF05746">
    <property type="entry name" value="DALR_1"/>
    <property type="match status" value="1"/>
</dbReference>
<dbReference type="Pfam" id="PF00750">
    <property type="entry name" value="tRNA-synt_1d"/>
    <property type="match status" value="1"/>
</dbReference>
<dbReference type="PRINTS" id="PR01038">
    <property type="entry name" value="TRNASYNTHARG"/>
</dbReference>
<dbReference type="SMART" id="SM01016">
    <property type="entry name" value="Arg_tRNA_synt_N"/>
    <property type="match status" value="1"/>
</dbReference>
<dbReference type="SMART" id="SM00836">
    <property type="entry name" value="DALR_1"/>
    <property type="match status" value="1"/>
</dbReference>
<dbReference type="SUPFAM" id="SSF47323">
    <property type="entry name" value="Anticodon-binding domain of a subclass of class I aminoacyl-tRNA synthetases"/>
    <property type="match status" value="1"/>
</dbReference>
<dbReference type="SUPFAM" id="SSF55190">
    <property type="entry name" value="Arginyl-tRNA synthetase (ArgRS), N-terminal 'additional' domain"/>
    <property type="match status" value="1"/>
</dbReference>
<dbReference type="SUPFAM" id="SSF52374">
    <property type="entry name" value="Nucleotidylyl transferase"/>
    <property type="match status" value="1"/>
</dbReference>
<dbReference type="PROSITE" id="PS00178">
    <property type="entry name" value="AA_TRNA_LIGASE_I"/>
    <property type="match status" value="1"/>
</dbReference>
<gene>
    <name evidence="1" type="primary">argS</name>
    <name type="ordered locus">BH0594</name>
</gene>
<name>SYR_BORHD</name>
<protein>
    <recommendedName>
        <fullName evidence="1">Arginine--tRNA ligase</fullName>
        <ecNumber evidence="1">6.1.1.19</ecNumber>
    </recommendedName>
    <alternativeName>
        <fullName evidence="1">Arginyl-tRNA synthetase</fullName>
        <shortName evidence="1">ArgRS</shortName>
    </alternativeName>
</protein>
<comment type="catalytic activity">
    <reaction evidence="1">
        <text>tRNA(Arg) + L-arginine + ATP = L-arginyl-tRNA(Arg) + AMP + diphosphate</text>
        <dbReference type="Rhea" id="RHEA:20301"/>
        <dbReference type="Rhea" id="RHEA-COMP:9658"/>
        <dbReference type="Rhea" id="RHEA-COMP:9673"/>
        <dbReference type="ChEBI" id="CHEBI:30616"/>
        <dbReference type="ChEBI" id="CHEBI:32682"/>
        <dbReference type="ChEBI" id="CHEBI:33019"/>
        <dbReference type="ChEBI" id="CHEBI:78442"/>
        <dbReference type="ChEBI" id="CHEBI:78513"/>
        <dbReference type="ChEBI" id="CHEBI:456215"/>
        <dbReference type="EC" id="6.1.1.19"/>
    </reaction>
</comment>
<comment type="subunit">
    <text evidence="1">Monomer.</text>
</comment>
<comment type="subcellular location">
    <subcellularLocation>
        <location evidence="1">Cytoplasm</location>
    </subcellularLocation>
</comment>
<comment type="similarity">
    <text evidence="1">Belongs to the class-I aminoacyl-tRNA synthetase family.</text>
</comment>
<proteinExistence type="inferred from homology"/>
<feature type="chain" id="PRO_1000095336" description="Arginine--tRNA ligase">
    <location>
        <begin position="1"/>
        <end position="584"/>
    </location>
</feature>
<feature type="short sequence motif" description="'HIGH' region">
    <location>
        <begin position="127"/>
        <end position="137"/>
    </location>
</feature>
<sequence length="584" mass="67429">MNSKIKKDLKDIISKTIKELALRESIKLEEINIIMQKPPKSELGDLSILIFEFSKILKLNTSIITEEIIKQIGDKYATKAMGPYLNIKFNRKEYIKDTIKKVNEQKEKYGINNVLKNKRIIIEFSSPNTNKPLHIGHLRNDIIGESLSRILKASGAQVTKINLINDRGTHICKSMLAYKKFGNNTTPELSLKKGDHLIGDFYVKYNEYAKNNEMAEDEIQQLLCKWEEGDEKTVQLWKKLNQWAIEGIKATYKLTNITFDKIYLESEIFKIGREIILKGLEEGLCYKREDGAICIDIPTEKNEISEQQFKQKVLLRANGTSIYLTQDLGNIVTRKNEFDFDEMIYVVGSEQIHHFKTLFYVANKLGITKENNLVHLSYGMVNLPEGKMKSREGNVIDADNLIHDLSESIILEIKKRNSDKKDYQEIALNISLGAIHYYLLKTAIHKDILFNKEESLSFTGNSGPYIQYVGARINSILEKYDELNLSNETINFDLLVNENEWEIIKIISEFEEHIIKASKDRNPSVIANYSYLLAKSFSTYYQDTKIIDKNKPELTHARIDLSKAVLQTIKNCMHLLNIPYMKKM</sequence>
<reference key="1">
    <citation type="submission" date="2004-12" db="EMBL/GenBank/DDBJ databases">
        <title>The genome sequence of Borrelia hermsii and Borrelia turicatae: comparative analysis of two agents of endemic N. America relapsing fever.</title>
        <authorList>
            <person name="Porcella S.F."/>
            <person name="Raffel S.J."/>
            <person name="Schrumpf M.E."/>
            <person name="Montgomery B."/>
            <person name="Smith T."/>
            <person name="Schwan T.G."/>
        </authorList>
    </citation>
    <scope>NUCLEOTIDE SEQUENCE [LARGE SCALE GENOMIC DNA]</scope>
    <source>
        <strain>HS1 / DAH</strain>
    </source>
</reference>
<keyword id="KW-0030">Aminoacyl-tRNA synthetase</keyword>
<keyword id="KW-0067">ATP-binding</keyword>
<keyword id="KW-0963">Cytoplasm</keyword>
<keyword id="KW-0436">Ligase</keyword>
<keyword id="KW-0547">Nucleotide-binding</keyword>
<keyword id="KW-0648">Protein biosynthesis</keyword>
<organism>
    <name type="scientific">Borrelia hermsii (strain HS1 / DAH)</name>
    <dbReference type="NCBI Taxonomy" id="314723"/>
    <lineage>
        <taxon>Bacteria</taxon>
        <taxon>Pseudomonadati</taxon>
        <taxon>Spirochaetota</taxon>
        <taxon>Spirochaetia</taxon>
        <taxon>Spirochaetales</taxon>
        <taxon>Borreliaceae</taxon>
        <taxon>Borrelia</taxon>
    </lineage>
</organism>
<accession>B2S0U2</accession>